<reference key="1">
    <citation type="journal article" date="2005" name="Proc. Natl. Acad. Sci. U.S.A.">
        <title>The complete genome sequence of Mycobacterium avium subspecies paratuberculosis.</title>
        <authorList>
            <person name="Li L."/>
            <person name="Bannantine J.P."/>
            <person name="Zhang Q."/>
            <person name="Amonsin A."/>
            <person name="May B.J."/>
            <person name="Alt D."/>
            <person name="Banerji N."/>
            <person name="Kanjilal S."/>
            <person name="Kapur V."/>
        </authorList>
    </citation>
    <scope>NUCLEOTIDE SEQUENCE [LARGE SCALE GENOMIC DNA]</scope>
    <source>
        <strain>ATCC BAA-968 / K-10</strain>
    </source>
</reference>
<comment type="function">
    <text evidence="1">Produces ATP from ADP in the presence of a proton gradient across the membrane. The alpha chain is a regulatory subunit.</text>
</comment>
<comment type="catalytic activity">
    <reaction evidence="1">
        <text>ATP + H2O + 4 H(+)(in) = ADP + phosphate + 5 H(+)(out)</text>
        <dbReference type="Rhea" id="RHEA:57720"/>
        <dbReference type="ChEBI" id="CHEBI:15377"/>
        <dbReference type="ChEBI" id="CHEBI:15378"/>
        <dbReference type="ChEBI" id="CHEBI:30616"/>
        <dbReference type="ChEBI" id="CHEBI:43474"/>
        <dbReference type="ChEBI" id="CHEBI:456216"/>
        <dbReference type="EC" id="7.1.2.2"/>
    </reaction>
</comment>
<comment type="subunit">
    <text evidence="1">F-type ATPases have 2 components, CF(1) - the catalytic core - and CF(0) - the membrane proton channel. CF(1) has five subunits: alpha(3), beta(3), gamma(1), delta(1), epsilon(1). CF(0) has three main subunits: a(1), b(2) and c(9-12). The alpha and beta chains form an alternating ring which encloses part of the gamma chain. CF(1) is attached to CF(0) by a central stalk formed by the gamma and epsilon chains, while a peripheral stalk is formed by the delta and b chains.</text>
</comment>
<comment type="subcellular location">
    <subcellularLocation>
        <location evidence="1">Cell membrane</location>
        <topology evidence="1">Peripheral membrane protein</topology>
    </subcellularLocation>
</comment>
<comment type="similarity">
    <text evidence="1">Belongs to the ATPase alpha/beta chains family.</text>
</comment>
<sequence length="554" mass="59993">MAELTISADDIQSAIEEYVGSFTSDTSREEVGTVVDAGDGIAHVEGLPSVMTQELLEFPGGVLGVALNLDEHSVGAVILGDFEKIEEGQQVKRTGEVLSVPVGDAFLGRVVNPLGQPIDGQGDIETDIRRALEIQAPSVVQRQSVKEPLQTGIKAIDAMTPIGRGQRQLIIGDRKTGKTAVCVDTILNQRQNWESGDEKKQVRCVYVAIGQKGTTIASVRRALEEGGAMDYTTIVAAPASDSAGFKWLAPYTGSAIAQHWMYDGKHVLIVFDDLSKQAEAYRAISLLLRRPPGREAYPGDVFYLHSRLLERCAKLSDELGGGSMTGLPIIETKANDISAYIPTNVISITDGQCFLESDLFNQGVRPAINVGVSVSRVGGAAQIKAMKEVAGSLRLDLSQFRELEAFAAFASDLDATSKAQLDRGARLVELLKQPQYQPMPVEEQVVSIFLGTGGHLDSVPVEDVRRFETELLDHMRASEDKILAGIRDTQKLSDEAAEELEKVINNFKKGFAATGGASVVPDEHVEALDEEELEKESVKVKKPAPEKKAKKEQK</sequence>
<proteinExistence type="inferred from homology"/>
<keyword id="KW-0066">ATP synthesis</keyword>
<keyword id="KW-0067">ATP-binding</keyword>
<keyword id="KW-1003">Cell membrane</keyword>
<keyword id="KW-0139">CF(1)</keyword>
<keyword id="KW-0375">Hydrogen ion transport</keyword>
<keyword id="KW-0406">Ion transport</keyword>
<keyword id="KW-0472">Membrane</keyword>
<keyword id="KW-0547">Nucleotide-binding</keyword>
<keyword id="KW-1185">Reference proteome</keyword>
<keyword id="KW-1278">Translocase</keyword>
<keyword id="KW-0813">Transport</keyword>
<feature type="chain" id="PRO_0000238289" description="ATP synthase subunit alpha">
    <location>
        <begin position="1"/>
        <end position="554"/>
    </location>
</feature>
<feature type="region of interest" description="Disordered" evidence="2">
    <location>
        <begin position="528"/>
        <end position="554"/>
    </location>
</feature>
<feature type="compositionally biased region" description="Basic and acidic residues" evidence="2">
    <location>
        <begin position="535"/>
        <end position="554"/>
    </location>
</feature>
<feature type="binding site" evidence="1">
    <location>
        <begin position="172"/>
        <end position="179"/>
    </location>
    <ligand>
        <name>ATP</name>
        <dbReference type="ChEBI" id="CHEBI:30616"/>
    </ligand>
</feature>
<feature type="site" description="Required for activity" evidence="1">
    <location>
        <position position="373"/>
    </location>
</feature>
<protein>
    <recommendedName>
        <fullName evidence="1">ATP synthase subunit alpha</fullName>
        <ecNumber evidence="1">7.1.2.2</ecNumber>
    </recommendedName>
    <alternativeName>
        <fullName evidence="1">ATP synthase F1 sector subunit alpha</fullName>
    </alternativeName>
    <alternativeName>
        <fullName evidence="1">F-ATPase subunit alpha</fullName>
    </alternativeName>
</protein>
<accession>Q73X57</accession>
<dbReference type="EC" id="7.1.2.2" evidence="1"/>
<dbReference type="EMBL" id="AE016958">
    <property type="protein sequence ID" value="AAS04770.1"/>
    <property type="molecule type" value="Genomic_DNA"/>
</dbReference>
<dbReference type="RefSeq" id="WP_003877295.1">
    <property type="nucleotide sequence ID" value="NZ_CP106873.1"/>
</dbReference>
<dbReference type="SMR" id="Q73X57"/>
<dbReference type="STRING" id="262316.MAP_2453c"/>
<dbReference type="GeneID" id="75269287"/>
<dbReference type="KEGG" id="mpa:MAP_2453c"/>
<dbReference type="eggNOG" id="COG0056">
    <property type="taxonomic scope" value="Bacteria"/>
</dbReference>
<dbReference type="HOGENOM" id="CLU_010091_2_1_11"/>
<dbReference type="Proteomes" id="UP000000580">
    <property type="component" value="Chromosome"/>
</dbReference>
<dbReference type="GO" id="GO:0005886">
    <property type="term" value="C:plasma membrane"/>
    <property type="evidence" value="ECO:0007669"/>
    <property type="project" value="UniProtKB-SubCell"/>
</dbReference>
<dbReference type="GO" id="GO:0045259">
    <property type="term" value="C:proton-transporting ATP synthase complex"/>
    <property type="evidence" value="ECO:0007669"/>
    <property type="project" value="UniProtKB-KW"/>
</dbReference>
<dbReference type="GO" id="GO:0043531">
    <property type="term" value="F:ADP binding"/>
    <property type="evidence" value="ECO:0007669"/>
    <property type="project" value="TreeGrafter"/>
</dbReference>
<dbReference type="GO" id="GO:0005524">
    <property type="term" value="F:ATP binding"/>
    <property type="evidence" value="ECO:0007669"/>
    <property type="project" value="UniProtKB-UniRule"/>
</dbReference>
<dbReference type="GO" id="GO:0046933">
    <property type="term" value="F:proton-transporting ATP synthase activity, rotational mechanism"/>
    <property type="evidence" value="ECO:0007669"/>
    <property type="project" value="UniProtKB-UniRule"/>
</dbReference>
<dbReference type="CDD" id="cd18113">
    <property type="entry name" value="ATP-synt_F1_alpha_C"/>
    <property type="match status" value="1"/>
</dbReference>
<dbReference type="CDD" id="cd18116">
    <property type="entry name" value="ATP-synt_F1_alpha_N"/>
    <property type="match status" value="1"/>
</dbReference>
<dbReference type="CDD" id="cd01132">
    <property type="entry name" value="F1-ATPase_alpha_CD"/>
    <property type="match status" value="1"/>
</dbReference>
<dbReference type="FunFam" id="1.20.150.20:FF:000001">
    <property type="entry name" value="ATP synthase subunit alpha"/>
    <property type="match status" value="1"/>
</dbReference>
<dbReference type="FunFam" id="2.40.30.20:FF:000001">
    <property type="entry name" value="ATP synthase subunit alpha"/>
    <property type="match status" value="1"/>
</dbReference>
<dbReference type="FunFam" id="3.40.50.300:FF:000002">
    <property type="entry name" value="ATP synthase subunit alpha"/>
    <property type="match status" value="1"/>
</dbReference>
<dbReference type="Gene3D" id="2.40.30.20">
    <property type="match status" value="1"/>
</dbReference>
<dbReference type="Gene3D" id="1.20.150.20">
    <property type="entry name" value="ATP synthase alpha/beta chain, C-terminal domain"/>
    <property type="match status" value="1"/>
</dbReference>
<dbReference type="Gene3D" id="3.40.50.300">
    <property type="entry name" value="P-loop containing nucleotide triphosphate hydrolases"/>
    <property type="match status" value="1"/>
</dbReference>
<dbReference type="HAMAP" id="MF_01346">
    <property type="entry name" value="ATP_synth_alpha_bact"/>
    <property type="match status" value="1"/>
</dbReference>
<dbReference type="InterPro" id="IPR023366">
    <property type="entry name" value="ATP_synth_asu-like_sf"/>
</dbReference>
<dbReference type="InterPro" id="IPR000793">
    <property type="entry name" value="ATP_synth_asu_C"/>
</dbReference>
<dbReference type="InterPro" id="IPR038376">
    <property type="entry name" value="ATP_synth_asu_C_sf"/>
</dbReference>
<dbReference type="InterPro" id="IPR033732">
    <property type="entry name" value="ATP_synth_F1_a_nt-bd_dom"/>
</dbReference>
<dbReference type="InterPro" id="IPR005294">
    <property type="entry name" value="ATP_synth_F1_asu"/>
</dbReference>
<dbReference type="InterPro" id="IPR020003">
    <property type="entry name" value="ATPase_a/bsu_AS"/>
</dbReference>
<dbReference type="InterPro" id="IPR004100">
    <property type="entry name" value="ATPase_F1/V1/A1_a/bsu_N"/>
</dbReference>
<dbReference type="InterPro" id="IPR036121">
    <property type="entry name" value="ATPase_F1/V1/A1_a/bsu_N_sf"/>
</dbReference>
<dbReference type="InterPro" id="IPR000194">
    <property type="entry name" value="ATPase_F1/V1/A1_a/bsu_nucl-bd"/>
</dbReference>
<dbReference type="InterPro" id="IPR027417">
    <property type="entry name" value="P-loop_NTPase"/>
</dbReference>
<dbReference type="NCBIfam" id="TIGR00962">
    <property type="entry name" value="atpA"/>
    <property type="match status" value="1"/>
</dbReference>
<dbReference type="NCBIfam" id="NF009884">
    <property type="entry name" value="PRK13343.1"/>
    <property type="match status" value="1"/>
</dbReference>
<dbReference type="PANTHER" id="PTHR48082">
    <property type="entry name" value="ATP SYNTHASE SUBUNIT ALPHA, MITOCHONDRIAL"/>
    <property type="match status" value="1"/>
</dbReference>
<dbReference type="PANTHER" id="PTHR48082:SF2">
    <property type="entry name" value="ATP SYNTHASE SUBUNIT ALPHA, MITOCHONDRIAL"/>
    <property type="match status" value="1"/>
</dbReference>
<dbReference type="Pfam" id="PF00006">
    <property type="entry name" value="ATP-synt_ab"/>
    <property type="match status" value="1"/>
</dbReference>
<dbReference type="Pfam" id="PF00306">
    <property type="entry name" value="ATP-synt_ab_C"/>
    <property type="match status" value="1"/>
</dbReference>
<dbReference type="Pfam" id="PF02874">
    <property type="entry name" value="ATP-synt_ab_N"/>
    <property type="match status" value="1"/>
</dbReference>
<dbReference type="PIRSF" id="PIRSF039088">
    <property type="entry name" value="F_ATPase_subunit_alpha"/>
    <property type="match status" value="1"/>
</dbReference>
<dbReference type="SUPFAM" id="SSF47917">
    <property type="entry name" value="C-terminal domain of alpha and beta subunits of F1 ATP synthase"/>
    <property type="match status" value="1"/>
</dbReference>
<dbReference type="SUPFAM" id="SSF50615">
    <property type="entry name" value="N-terminal domain of alpha and beta subunits of F1 ATP synthase"/>
    <property type="match status" value="1"/>
</dbReference>
<dbReference type="SUPFAM" id="SSF52540">
    <property type="entry name" value="P-loop containing nucleoside triphosphate hydrolases"/>
    <property type="match status" value="1"/>
</dbReference>
<dbReference type="PROSITE" id="PS00152">
    <property type="entry name" value="ATPASE_ALPHA_BETA"/>
    <property type="match status" value="1"/>
</dbReference>
<evidence type="ECO:0000255" key="1">
    <source>
        <dbReference type="HAMAP-Rule" id="MF_01346"/>
    </source>
</evidence>
<evidence type="ECO:0000256" key="2">
    <source>
        <dbReference type="SAM" id="MobiDB-lite"/>
    </source>
</evidence>
<organism>
    <name type="scientific">Mycolicibacterium paratuberculosis (strain ATCC BAA-968 / K-10)</name>
    <name type="common">Mycobacterium paratuberculosis</name>
    <dbReference type="NCBI Taxonomy" id="262316"/>
    <lineage>
        <taxon>Bacteria</taxon>
        <taxon>Bacillati</taxon>
        <taxon>Actinomycetota</taxon>
        <taxon>Actinomycetes</taxon>
        <taxon>Mycobacteriales</taxon>
        <taxon>Mycobacteriaceae</taxon>
        <taxon>Mycobacterium</taxon>
        <taxon>Mycobacterium avium complex (MAC)</taxon>
    </lineage>
</organism>
<gene>
    <name evidence="1" type="primary">atpA</name>
    <name type="ordered locus">MAP_2453c</name>
</gene>
<name>ATPA_MYCPA</name>